<sequence>MTDNNQNNENHENSSENSKDHHEARAGAFERFTNRKKRFRENAQKNAESSNHETLSHHKKEHRPNKKPNNHHKPKHASQKTRNYAKEELDNNKVEGVTEILHVNERGTLGFHKELKKGVEANNKIQVEHLNPHYKMNLNSKASVKITPLGGLGEIGGNMMVIETPKSAIVIDAGMSFPKEGLFGVDILIPDFSYLHQIKDKIAGIIITHAHEDHIGATPYLFKELQFPLYGTPLSLGLIGSKFDEHGLKKYRSYFKIVEKRCPISVGEFIIEWIHITHSIIDSSALAIQTKAGTIIHTGDFKIDHTPVDNLPTDLYRLAHYGEKGVMLLLSDSTNSHKSGTTPSESTIAPAFDTLFKEAQGRVIMSTFSSNIHRVHQAIQYGIKYNRKIAVIGRSMEKNLDIARELGYIHLPYQSFIEANEVAKYPDNEVLIVTTGSQGETMSALYRMATDEHRHISIKPNDLVIISAKAIPGNEASVSAVLNFLIKKEAKVAYQEFDNIHVSGHAAQEEQKLMLRLIKPKFFLPVHGEYNHVARHKQTAIACGVPEKNIYLMEDGDQVEVGPAFIKKVGTIKSGKSYVDNQSNLSIDTSIVQQREEVASAGVFAATIFVNKNKQALLESSQFSSLGLVGFKDEKHLIKEIQGGLEVLLKSSNAEILNNPKKLEDHTRNFIRKALFKKFRKYPAIICHAHSF</sequence>
<feature type="chain" id="PRO_0000215270" description="Ribonuclease J">
    <location>
        <begin position="1"/>
        <end position="692"/>
    </location>
</feature>
<feature type="region of interest" description="Disordered" evidence="3">
    <location>
        <begin position="1"/>
        <end position="91"/>
    </location>
</feature>
<feature type="compositionally biased region" description="Basic and acidic residues" evidence="3">
    <location>
        <begin position="9"/>
        <end position="25"/>
    </location>
</feature>
<feature type="compositionally biased region" description="Basic residues" evidence="3">
    <location>
        <begin position="57"/>
        <end position="79"/>
    </location>
</feature>
<feature type="binding site" evidence="2">
    <location>
        <position position="209"/>
    </location>
    <ligand>
        <name>Zn(2+)</name>
        <dbReference type="ChEBI" id="CHEBI:29105"/>
        <label>1</label>
        <note>catalytic</note>
    </ligand>
</feature>
<feature type="binding site" evidence="2">
    <location>
        <position position="211"/>
    </location>
    <ligand>
        <name>Zn(2+)</name>
        <dbReference type="ChEBI" id="CHEBI:29105"/>
        <label>1</label>
        <note>catalytic</note>
    </ligand>
</feature>
<feature type="binding site" evidence="2">
    <location>
        <position position="213"/>
    </location>
    <ligand>
        <name>Zn(2+)</name>
        <dbReference type="ChEBI" id="CHEBI:29105"/>
        <label>2</label>
        <note>catalytic</note>
    </ligand>
</feature>
<feature type="binding site" evidence="2">
    <location>
        <position position="214"/>
    </location>
    <ligand>
        <name>Zn(2+)</name>
        <dbReference type="ChEBI" id="CHEBI:29105"/>
        <label>2</label>
        <note>catalytic</note>
    </ligand>
</feature>
<feature type="binding site" evidence="2">
    <location>
        <position position="278"/>
    </location>
    <ligand>
        <name>Zn(2+)</name>
        <dbReference type="ChEBI" id="CHEBI:29105"/>
        <label>1</label>
        <note>catalytic</note>
    </ligand>
</feature>
<feature type="binding site" evidence="2">
    <location>
        <position position="300"/>
    </location>
    <ligand>
        <name>Zn(2+)</name>
        <dbReference type="ChEBI" id="CHEBI:29105"/>
        <label>1</label>
        <note>catalytic</note>
    </ligand>
</feature>
<feature type="binding site" evidence="2">
    <location>
        <position position="300"/>
    </location>
    <ligand>
        <name>Zn(2+)</name>
        <dbReference type="ChEBI" id="CHEBI:29105"/>
        <label>2</label>
        <note>catalytic</note>
    </ligand>
</feature>
<feature type="binding site" evidence="2">
    <location>
        <begin position="501"/>
        <end position="505"/>
    </location>
    <ligand>
        <name>substrate</name>
    </ligand>
</feature>
<feature type="binding site" evidence="2">
    <location>
        <position position="527"/>
    </location>
    <ligand>
        <name>Zn(2+)</name>
        <dbReference type="ChEBI" id="CHEBI:29105"/>
        <label>2</label>
        <note>catalytic</note>
    </ligand>
</feature>
<feature type="modified residue" description="N6-acetyllysine" evidence="1">
    <location>
        <position position="135"/>
    </location>
</feature>
<feature type="modified residue" description="N6-acetyllysine" evidence="1">
    <location>
        <position position="141"/>
    </location>
</feature>
<feature type="modified residue" description="N6-acetyllysine" evidence="1">
    <location>
        <position position="324"/>
    </location>
</feature>
<feature type="modified residue" description="N6-acetyllysine" evidence="1">
    <location>
        <position position="338"/>
    </location>
</feature>
<feature type="modified residue" description="N6-acetyllysine" evidence="1">
    <location>
        <position position="398"/>
    </location>
</feature>
<feature type="modified residue" description="N6-acetyllysine" evidence="1">
    <location>
        <position position="512"/>
    </location>
</feature>
<feature type="modified residue" description="N6-acetyllysine" evidence="1">
    <location>
        <position position="548"/>
    </location>
</feature>
<feature type="modified residue" description="N6-acetyllysine" evidence="1">
    <location>
        <position position="635"/>
    </location>
</feature>
<feature type="modified residue" description="N6-acetyllysine" evidence="1">
    <location>
        <position position="650"/>
    </location>
</feature>
<protein>
    <recommendedName>
        <fullName evidence="2">Ribonuclease J</fullName>
        <shortName evidence="2">RNase J</shortName>
        <ecNumber evidence="2">3.1.-.-</ecNumber>
    </recommendedName>
</protein>
<name>RNJ_HELPJ</name>
<reference key="1">
    <citation type="journal article" date="1999" name="Nature">
        <title>Genomic sequence comparison of two unrelated isolates of the human gastric pathogen Helicobacter pylori.</title>
        <authorList>
            <person name="Alm R.A."/>
            <person name="Ling L.-S.L."/>
            <person name="Moir D.T."/>
            <person name="King B.L."/>
            <person name="Brown E.D."/>
            <person name="Doig P.C."/>
            <person name="Smith D.R."/>
            <person name="Noonan B."/>
            <person name="Guild B.C."/>
            <person name="deJonge B.L."/>
            <person name="Carmel G."/>
            <person name="Tummino P.J."/>
            <person name="Caruso A."/>
            <person name="Uria-Nickelsen M."/>
            <person name="Mills D.M."/>
            <person name="Ives C."/>
            <person name="Gibson R."/>
            <person name="Merberg D."/>
            <person name="Mills S.D."/>
            <person name="Jiang Q."/>
            <person name="Taylor D.E."/>
            <person name="Vovis G.F."/>
            <person name="Trust T.J."/>
        </authorList>
    </citation>
    <scope>NUCLEOTIDE SEQUENCE [LARGE SCALE GENOMIC DNA]</scope>
    <source>
        <strain>J99 / ATCC 700824</strain>
    </source>
</reference>
<evidence type="ECO:0000250" key="1">
    <source>
        <dbReference type="UniProtKB" id="B9XZG7"/>
    </source>
</evidence>
<evidence type="ECO:0000255" key="2">
    <source>
        <dbReference type="HAMAP-Rule" id="MF_01491"/>
    </source>
</evidence>
<evidence type="ECO:0000256" key="3">
    <source>
        <dbReference type="SAM" id="MobiDB-lite"/>
    </source>
</evidence>
<keyword id="KW-0007">Acetylation</keyword>
<keyword id="KW-0963">Cytoplasm</keyword>
<keyword id="KW-0255">Endonuclease</keyword>
<keyword id="KW-0269">Exonuclease</keyword>
<keyword id="KW-0378">Hydrolase</keyword>
<keyword id="KW-0479">Metal-binding</keyword>
<keyword id="KW-0540">Nuclease</keyword>
<keyword id="KW-0694">RNA-binding</keyword>
<keyword id="KW-0698">rRNA processing</keyword>
<keyword id="KW-0862">Zinc</keyword>
<comment type="function">
    <text evidence="1">An RNase that has 5'-3' exoribonuclease and endoribonuclease activity. Degrades 5'-monophosphorylated ssRNA and dsRNA, considerably more active on ssRNA. Association with RhpA significantly increases the dsRNase activity. Degrades RNA substrate with hairpin structures at both ends with low activity, but presence of RhpA significantly increases the activity on this substrate. Stimulates ATPase activity of RNA helicase RhpA. Involved in stabilization of mRNA but apparently not rRNA.</text>
</comment>
<comment type="cofactor">
    <cofactor evidence="2">
        <name>Zn(2+)</name>
        <dbReference type="ChEBI" id="CHEBI:29105"/>
    </cofactor>
    <text evidence="2">Binds up to 2 Zn(2+) ions per subunit. It is not clear if Zn(2+) or Mg(2+) is physiologically important.</text>
</comment>
<comment type="activity regulation">
    <text evidence="1">Catalytic activity is regulated by the balance between homodimers and homotetramers, with homotetramers being the active forms of this enzyme. Acetylation allosterically regulates the homooligomerization state and hence the catalytic activity.</text>
</comment>
<comment type="subunit">
    <text evidence="1">Homodimer. Homotetramer; dimer of homodimers. Interacts with RNA helicase RhpA, might be a member of a minimal RNA degradosome complex.</text>
</comment>
<comment type="subcellular location">
    <subcellularLocation>
        <location evidence="2">Cytoplasm</location>
    </subcellularLocation>
    <text evidence="1">The RNaseJ-RhpA complex co-localizes with 70S ribosomes and polysomes; remains associated with ribosomes in the absence of RhpA.</text>
</comment>
<comment type="domain">
    <text evidence="1">The first 132 residues are not conserved outside of Helicobacter. Important for protein stability. The C-terminal domain is required for homooligomerization.</text>
</comment>
<comment type="PTM">
    <text evidence="1">Acetylated on nine lysine residues. Some of the residues are acetylated by multiple different mechanisms. RimL is partially responsible for the acetylation of Lys-324, Lys-398 and Lys-650. HPB8_1270 homolog is partially responsible for the acetylation of Lys-324, Lys-398, Lys-512 and Lys-650. Acetyl-phosphate-mediated non-enzymatic acetylation pathway takes part in the acetylation of Lys-135, Lys-324, Lys-398, Lys-512 and Lys-650. Acetylation of the remaining residues Lys-141, Lys-338, Lys-548 and Lys-635 occurs by a yet undetermined mechanism. Acetylation on a number of these residues is important for growth regulation and proper cell morphology.</text>
</comment>
<comment type="similarity">
    <text evidence="2">Belongs to the metallo-beta-lactamase superfamily. RNA-metabolizing metallo-beta-lactamase-like family. Bacterial RNase J subfamily.</text>
</comment>
<gene>
    <name evidence="2" type="primary">rnj</name>
    <name type="ordered locus">jhp_1323</name>
</gene>
<organism>
    <name type="scientific">Helicobacter pylori (strain J99 / ATCC 700824)</name>
    <name type="common">Campylobacter pylori J99</name>
    <dbReference type="NCBI Taxonomy" id="85963"/>
    <lineage>
        <taxon>Bacteria</taxon>
        <taxon>Pseudomonadati</taxon>
        <taxon>Campylobacterota</taxon>
        <taxon>Epsilonproteobacteria</taxon>
        <taxon>Campylobacterales</taxon>
        <taxon>Helicobacteraceae</taxon>
        <taxon>Helicobacter</taxon>
    </lineage>
</organism>
<dbReference type="EC" id="3.1.-.-" evidence="2"/>
<dbReference type="EMBL" id="AE001439">
    <property type="protein sequence ID" value="AAD06901.1"/>
    <property type="molecule type" value="Genomic_DNA"/>
</dbReference>
<dbReference type="PIR" id="F71821">
    <property type="entry name" value="F71821"/>
</dbReference>
<dbReference type="RefSeq" id="WP_000131651.1">
    <property type="nucleotide sequence ID" value="NC_000921.1"/>
</dbReference>
<dbReference type="SMR" id="Q9ZJI6"/>
<dbReference type="KEGG" id="hpj:jhp_1323"/>
<dbReference type="eggNOG" id="COG0595">
    <property type="taxonomic scope" value="Bacteria"/>
</dbReference>
<dbReference type="Proteomes" id="UP000000804">
    <property type="component" value="Chromosome"/>
</dbReference>
<dbReference type="GO" id="GO:0005737">
    <property type="term" value="C:cytoplasm"/>
    <property type="evidence" value="ECO:0000250"/>
    <property type="project" value="UniProtKB"/>
</dbReference>
<dbReference type="GO" id="GO:0004534">
    <property type="term" value="F:5'-3' RNA exonuclease activity"/>
    <property type="evidence" value="ECO:0000250"/>
    <property type="project" value="UniProtKB"/>
</dbReference>
<dbReference type="GO" id="GO:0042802">
    <property type="term" value="F:identical protein binding"/>
    <property type="evidence" value="ECO:0000250"/>
    <property type="project" value="UniProtKB"/>
</dbReference>
<dbReference type="GO" id="GO:0042803">
    <property type="term" value="F:protein homodimerization activity"/>
    <property type="evidence" value="ECO:0000250"/>
    <property type="project" value="UniProtKB"/>
</dbReference>
<dbReference type="GO" id="GO:0003723">
    <property type="term" value="F:RNA binding"/>
    <property type="evidence" value="ECO:0007669"/>
    <property type="project" value="UniProtKB-UniRule"/>
</dbReference>
<dbReference type="GO" id="GO:0004521">
    <property type="term" value="F:RNA endonuclease activity"/>
    <property type="evidence" value="ECO:0000250"/>
    <property type="project" value="UniProtKB"/>
</dbReference>
<dbReference type="GO" id="GO:0008270">
    <property type="term" value="F:zinc ion binding"/>
    <property type="evidence" value="ECO:0007669"/>
    <property type="project" value="InterPro"/>
</dbReference>
<dbReference type="GO" id="GO:0051289">
    <property type="term" value="P:protein homotetramerization"/>
    <property type="evidence" value="ECO:0000250"/>
    <property type="project" value="UniProtKB"/>
</dbReference>
<dbReference type="GO" id="GO:0006364">
    <property type="term" value="P:rRNA processing"/>
    <property type="evidence" value="ECO:0007669"/>
    <property type="project" value="UniProtKB-UniRule"/>
</dbReference>
<dbReference type="CDD" id="cd07714">
    <property type="entry name" value="RNaseJ_MBL-fold"/>
    <property type="match status" value="1"/>
</dbReference>
<dbReference type="Gene3D" id="3.10.20.580">
    <property type="match status" value="1"/>
</dbReference>
<dbReference type="Gene3D" id="3.40.50.10710">
    <property type="entry name" value="Metallo-hydrolase/oxidoreductase"/>
    <property type="match status" value="1"/>
</dbReference>
<dbReference type="Gene3D" id="3.60.15.10">
    <property type="entry name" value="Ribonuclease Z/Hydroxyacylglutathione hydrolase-like"/>
    <property type="match status" value="1"/>
</dbReference>
<dbReference type="HAMAP" id="MF_01491">
    <property type="entry name" value="RNase_J_bact"/>
    <property type="match status" value="1"/>
</dbReference>
<dbReference type="InterPro" id="IPR001279">
    <property type="entry name" value="Metallo-B-lactamas"/>
</dbReference>
<dbReference type="InterPro" id="IPR036866">
    <property type="entry name" value="RibonucZ/Hydroxyglut_hydro"/>
</dbReference>
<dbReference type="InterPro" id="IPR011108">
    <property type="entry name" value="RMMBL"/>
</dbReference>
<dbReference type="InterPro" id="IPR004613">
    <property type="entry name" value="RNase_J"/>
</dbReference>
<dbReference type="InterPro" id="IPR042173">
    <property type="entry name" value="RNase_J_2"/>
</dbReference>
<dbReference type="InterPro" id="IPR055132">
    <property type="entry name" value="RNase_J_b_CASP"/>
</dbReference>
<dbReference type="InterPro" id="IPR030854">
    <property type="entry name" value="RNase_J_bac"/>
</dbReference>
<dbReference type="InterPro" id="IPR041636">
    <property type="entry name" value="RNase_J_C"/>
</dbReference>
<dbReference type="InterPro" id="IPR001587">
    <property type="entry name" value="RNase_J_CS"/>
</dbReference>
<dbReference type="NCBIfam" id="TIGR00649">
    <property type="entry name" value="MG423"/>
    <property type="match status" value="1"/>
</dbReference>
<dbReference type="PANTHER" id="PTHR43694">
    <property type="entry name" value="RIBONUCLEASE J"/>
    <property type="match status" value="1"/>
</dbReference>
<dbReference type="PANTHER" id="PTHR43694:SF1">
    <property type="entry name" value="RIBONUCLEASE J"/>
    <property type="match status" value="1"/>
</dbReference>
<dbReference type="Pfam" id="PF00753">
    <property type="entry name" value="Lactamase_B"/>
    <property type="match status" value="1"/>
</dbReference>
<dbReference type="Pfam" id="PF07521">
    <property type="entry name" value="RMMBL"/>
    <property type="match status" value="1"/>
</dbReference>
<dbReference type="Pfam" id="PF22505">
    <property type="entry name" value="RNase_J_b_CASP"/>
    <property type="match status" value="1"/>
</dbReference>
<dbReference type="Pfam" id="PF17770">
    <property type="entry name" value="RNase_J_C"/>
    <property type="match status" value="1"/>
</dbReference>
<dbReference type="SMART" id="SM00849">
    <property type="entry name" value="Lactamase_B"/>
    <property type="match status" value="1"/>
</dbReference>
<dbReference type="SUPFAM" id="SSF56281">
    <property type="entry name" value="Metallo-hydrolase/oxidoreductase"/>
    <property type="match status" value="1"/>
</dbReference>
<dbReference type="PROSITE" id="PS01292">
    <property type="entry name" value="UPF0036"/>
    <property type="match status" value="1"/>
</dbReference>
<accession>Q9ZJI6</accession>
<proteinExistence type="inferred from homology"/>